<feature type="chain" id="PRO_0000320637" description="E3 ubiquitin-protein ligase RNFT1">
    <location>
        <begin position="1"/>
        <end position="419"/>
    </location>
</feature>
<feature type="transmembrane region" description="Helical" evidence="2">
    <location>
        <begin position="141"/>
        <end position="161"/>
    </location>
</feature>
<feature type="transmembrane region" description="Helical" evidence="2">
    <location>
        <begin position="187"/>
        <end position="207"/>
    </location>
</feature>
<feature type="transmembrane region" description="Helical" evidence="2">
    <location>
        <begin position="217"/>
        <end position="237"/>
    </location>
</feature>
<feature type="transmembrane region" description="Helical" evidence="2">
    <location>
        <begin position="240"/>
        <end position="260"/>
    </location>
</feature>
<feature type="transmembrane region" description="Helical" evidence="2">
    <location>
        <begin position="270"/>
        <end position="290"/>
    </location>
</feature>
<feature type="transmembrane region" description="Helical" evidence="2">
    <location>
        <begin position="303"/>
        <end position="323"/>
    </location>
</feature>
<feature type="zinc finger region" description="RING-type" evidence="3">
    <location>
        <begin position="359"/>
        <end position="397"/>
    </location>
</feature>
<feature type="region of interest" description="Disordered" evidence="4">
    <location>
        <begin position="1"/>
        <end position="120"/>
    </location>
</feature>
<feature type="region of interest" description="Required for ubiquitin ligase activity and for protection against ER stress-induced cell death" evidence="1">
    <location>
        <begin position="352"/>
        <end position="403"/>
    </location>
</feature>
<feature type="compositionally biased region" description="Polar residues" evidence="4">
    <location>
        <begin position="31"/>
        <end position="44"/>
    </location>
</feature>
<feature type="compositionally biased region" description="Polar residues" evidence="4">
    <location>
        <begin position="72"/>
        <end position="82"/>
    </location>
</feature>
<feature type="compositionally biased region" description="Basic residues" evidence="4">
    <location>
        <begin position="84"/>
        <end position="102"/>
    </location>
</feature>
<keyword id="KW-0256">Endoplasmic reticulum</keyword>
<keyword id="KW-0472">Membrane</keyword>
<keyword id="KW-0479">Metal-binding</keyword>
<keyword id="KW-1185">Reference proteome</keyword>
<keyword id="KW-0808">Transferase</keyword>
<keyword id="KW-0812">Transmembrane</keyword>
<keyword id="KW-1133">Transmembrane helix</keyword>
<keyword id="KW-0833">Ubl conjugation pathway</keyword>
<keyword id="KW-0862">Zinc</keyword>
<keyword id="KW-0863">Zinc-finger</keyword>
<protein>
    <recommendedName>
        <fullName evidence="5">E3 ubiquitin-protein ligase RNFT1</fullName>
        <ecNumber evidence="1">2.3.2.27</ecNumber>
    </recommendedName>
    <alternativeName>
        <fullName>RING finger and transmembrane domain-containing protein 1</fullName>
    </alternativeName>
</protein>
<comment type="function">
    <text evidence="1">E3 ubiquitin-protein ligase that acts in the endoplasmic reticulum (ER)-associated degradation (ERAD) pathway, which targets misfolded proteins that accumulate in the endoplasmic reticulum (ER) for ubiquitination and subsequent proteasome-mediated degradation. Protects cells from ER stress-induced apoptosis.</text>
</comment>
<comment type="catalytic activity">
    <reaction evidence="1">
        <text>S-ubiquitinyl-[E2 ubiquitin-conjugating enzyme]-L-cysteine + [acceptor protein]-L-lysine = [E2 ubiquitin-conjugating enzyme]-L-cysteine + N(6)-ubiquitinyl-[acceptor protein]-L-lysine.</text>
        <dbReference type="EC" id="2.3.2.27"/>
    </reaction>
</comment>
<comment type="pathway">
    <text evidence="1">Protein modification; protein ubiquitination.</text>
</comment>
<comment type="subcellular location">
    <subcellularLocation>
        <location evidence="1">Endoplasmic reticulum membrane</location>
        <topology evidence="1">Multi-pass membrane protein</topology>
    </subcellularLocation>
</comment>
<comment type="sequence caution" evidence="5">
    <conflict type="erroneous initiation">
        <sequence resource="EMBL-CDS" id="AAH66378"/>
    </conflict>
</comment>
<accession>Q6NZ21</accession>
<organism>
    <name type="scientific">Danio rerio</name>
    <name type="common">Zebrafish</name>
    <name type="synonym">Brachydanio rerio</name>
    <dbReference type="NCBI Taxonomy" id="7955"/>
    <lineage>
        <taxon>Eukaryota</taxon>
        <taxon>Metazoa</taxon>
        <taxon>Chordata</taxon>
        <taxon>Craniata</taxon>
        <taxon>Vertebrata</taxon>
        <taxon>Euteleostomi</taxon>
        <taxon>Actinopterygii</taxon>
        <taxon>Neopterygii</taxon>
        <taxon>Teleostei</taxon>
        <taxon>Ostariophysi</taxon>
        <taxon>Cypriniformes</taxon>
        <taxon>Danionidae</taxon>
        <taxon>Danioninae</taxon>
        <taxon>Danio</taxon>
    </lineage>
</organism>
<gene>
    <name type="primary">rnft1</name>
    <name type="ORF">zgc:77306</name>
</gene>
<reference key="1">
    <citation type="submission" date="2004-02" db="EMBL/GenBank/DDBJ databases">
        <authorList>
            <consortium name="NIH - Zebrafish Gene Collection (ZGC) project"/>
        </authorList>
    </citation>
    <scope>NUCLEOTIDE SEQUENCE [LARGE SCALE MRNA]</scope>
    <source>
        <tissue>Embryo</tissue>
    </source>
</reference>
<sequence>MKLRAQFDRGTYSESKGSFKLRDSLDPMQPEPSSREGNGLSLTLQPELLARMPGAGSSSGTETGEDVRVPMGSSSGSTNGRGATSRRMRTASHSHSHTHGHGHSHEHESDSGESDLESGESSSSISELRYLLRWLKKSLPFIVILCAKLVIQHALGLAVAVGLFTTFMYVNKSIQTQVFLHDRRTNLHCAWLLLFLTSSSLLVFYTFHTQSLYRCLFFANATIDYHNFWEVLWSVGVTNFILKFIFMGFKCLILLVPCPLMTYRRRGQWYMLIEEVGQLYQVIAPVPLWFRYLVSYDEMDTSVGLTLGILLALLYLIMKLLALYGLSGSLQKTLRTFFSPEVNGAPASPAQIREAGDICPICQADFKQPRVLVCQHIFCEECIAQWLNQERTCPLCRTVITDKVHKWKDGATSAHLQIY</sequence>
<evidence type="ECO:0000250" key="1">
    <source>
        <dbReference type="UniProtKB" id="Q5M7Z0"/>
    </source>
</evidence>
<evidence type="ECO:0000255" key="2"/>
<evidence type="ECO:0000255" key="3">
    <source>
        <dbReference type="PROSITE-ProRule" id="PRU00175"/>
    </source>
</evidence>
<evidence type="ECO:0000256" key="4">
    <source>
        <dbReference type="SAM" id="MobiDB-lite"/>
    </source>
</evidence>
<evidence type="ECO:0000305" key="5"/>
<dbReference type="EC" id="2.3.2.27" evidence="1"/>
<dbReference type="EMBL" id="BC066378">
    <property type="protein sequence ID" value="AAH66378.1"/>
    <property type="status" value="ALT_INIT"/>
    <property type="molecule type" value="mRNA"/>
</dbReference>
<dbReference type="RefSeq" id="NP_998393.2">
    <property type="nucleotide sequence ID" value="NM_213228.2"/>
</dbReference>
<dbReference type="FunCoup" id="Q6NZ21">
    <property type="interactions" value="618"/>
</dbReference>
<dbReference type="STRING" id="7955.ENSDARP00000013898"/>
<dbReference type="PaxDb" id="7955-ENSDARP00000013898"/>
<dbReference type="Ensembl" id="ENSDART00000022484">
    <property type="protein sequence ID" value="ENSDARP00000013898"/>
    <property type="gene ID" value="ENSDARG00000015917"/>
</dbReference>
<dbReference type="Ensembl" id="ENSDART00000182807">
    <property type="protein sequence ID" value="ENSDARP00000148924"/>
    <property type="gene ID" value="ENSDARG00000116783"/>
</dbReference>
<dbReference type="GeneID" id="406509"/>
<dbReference type="KEGG" id="dre:406509"/>
<dbReference type="AGR" id="ZFIN:ZDB-GENE-040426-2324"/>
<dbReference type="CTD" id="51136"/>
<dbReference type="ZFIN" id="ZDB-GENE-040426-2324">
    <property type="gene designation" value="rnft1"/>
</dbReference>
<dbReference type="eggNOG" id="KOG4638">
    <property type="taxonomic scope" value="Eukaryota"/>
</dbReference>
<dbReference type="HOGENOM" id="CLU_039460_2_1_1"/>
<dbReference type="InParanoid" id="Q6NZ21"/>
<dbReference type="OMA" id="GCIHSRL"/>
<dbReference type="OrthoDB" id="9049620at2759"/>
<dbReference type="PhylomeDB" id="Q6NZ21"/>
<dbReference type="TreeFam" id="TF331930"/>
<dbReference type="UniPathway" id="UPA00143"/>
<dbReference type="PRO" id="PR:Q6NZ21"/>
<dbReference type="Proteomes" id="UP000000437">
    <property type="component" value="Alternate scaffold 10"/>
</dbReference>
<dbReference type="Proteomes" id="UP000000437">
    <property type="component" value="Chromosome 10"/>
</dbReference>
<dbReference type="Bgee" id="ENSDARG00000015917">
    <property type="expression patterns" value="Expressed in mature ovarian follicle and 24 other cell types or tissues"/>
</dbReference>
<dbReference type="GO" id="GO:0005783">
    <property type="term" value="C:endoplasmic reticulum"/>
    <property type="evidence" value="ECO:0000318"/>
    <property type="project" value="GO_Central"/>
</dbReference>
<dbReference type="GO" id="GO:0005789">
    <property type="term" value="C:endoplasmic reticulum membrane"/>
    <property type="evidence" value="ECO:0007669"/>
    <property type="project" value="UniProtKB-SubCell"/>
</dbReference>
<dbReference type="GO" id="GO:0061630">
    <property type="term" value="F:ubiquitin protein ligase activity"/>
    <property type="evidence" value="ECO:0000318"/>
    <property type="project" value="GO_Central"/>
</dbReference>
<dbReference type="GO" id="GO:0008270">
    <property type="term" value="F:zinc ion binding"/>
    <property type="evidence" value="ECO:0007669"/>
    <property type="project" value="UniProtKB-KW"/>
</dbReference>
<dbReference type="GO" id="GO:1904294">
    <property type="term" value="P:positive regulation of ERAD pathway"/>
    <property type="evidence" value="ECO:0000318"/>
    <property type="project" value="GO_Central"/>
</dbReference>
<dbReference type="GO" id="GO:0016567">
    <property type="term" value="P:protein ubiquitination"/>
    <property type="evidence" value="ECO:0007669"/>
    <property type="project" value="UniProtKB-UniPathway"/>
</dbReference>
<dbReference type="Gene3D" id="3.30.40.10">
    <property type="entry name" value="Zinc/RING finger domain, C3HC4 (zinc finger)"/>
    <property type="match status" value="1"/>
</dbReference>
<dbReference type="InterPro" id="IPR044235">
    <property type="entry name" value="RNFT1/2"/>
</dbReference>
<dbReference type="InterPro" id="IPR001841">
    <property type="entry name" value="Znf_RING"/>
</dbReference>
<dbReference type="InterPro" id="IPR013083">
    <property type="entry name" value="Znf_RING/FYVE/PHD"/>
</dbReference>
<dbReference type="InterPro" id="IPR017907">
    <property type="entry name" value="Znf_RING_CS"/>
</dbReference>
<dbReference type="PANTHER" id="PTHR15860:SF1">
    <property type="entry name" value="E3 UBIQUITIN-PROTEIN LIGASE RNFT1"/>
    <property type="match status" value="1"/>
</dbReference>
<dbReference type="PANTHER" id="PTHR15860">
    <property type="entry name" value="UNCHARACTERIZED RING FINGER-CONTAINING PROTEIN"/>
    <property type="match status" value="1"/>
</dbReference>
<dbReference type="Pfam" id="PF13639">
    <property type="entry name" value="zf-RING_2"/>
    <property type="match status" value="1"/>
</dbReference>
<dbReference type="SMART" id="SM00184">
    <property type="entry name" value="RING"/>
    <property type="match status" value="1"/>
</dbReference>
<dbReference type="SUPFAM" id="SSF57850">
    <property type="entry name" value="RING/U-box"/>
    <property type="match status" value="1"/>
</dbReference>
<dbReference type="PROSITE" id="PS00518">
    <property type="entry name" value="ZF_RING_1"/>
    <property type="match status" value="1"/>
</dbReference>
<dbReference type="PROSITE" id="PS50089">
    <property type="entry name" value="ZF_RING_2"/>
    <property type="match status" value="1"/>
</dbReference>
<proteinExistence type="evidence at transcript level"/>
<name>RNFT1_DANRE</name>